<keyword id="KW-0046">Antibiotic resistance</keyword>
<keyword id="KW-0997">Cell inner membrane</keyword>
<keyword id="KW-1003">Cell membrane</keyword>
<keyword id="KW-0133">Cell shape</keyword>
<keyword id="KW-0961">Cell wall biogenesis/degradation</keyword>
<keyword id="KW-0378">Hydrolase</keyword>
<keyword id="KW-0472">Membrane</keyword>
<keyword id="KW-0573">Peptidoglycan synthesis</keyword>
<keyword id="KW-1185">Reference proteome</keyword>
<keyword id="KW-0812">Transmembrane</keyword>
<keyword id="KW-1133">Transmembrane helix</keyword>
<evidence type="ECO:0000255" key="1">
    <source>
        <dbReference type="HAMAP-Rule" id="MF_01006"/>
    </source>
</evidence>
<name>UPPP_METCA</name>
<organism>
    <name type="scientific">Methylococcus capsulatus (strain ATCC 33009 / NCIMB 11132 / Bath)</name>
    <dbReference type="NCBI Taxonomy" id="243233"/>
    <lineage>
        <taxon>Bacteria</taxon>
        <taxon>Pseudomonadati</taxon>
        <taxon>Pseudomonadota</taxon>
        <taxon>Gammaproteobacteria</taxon>
        <taxon>Methylococcales</taxon>
        <taxon>Methylococcaceae</taxon>
        <taxon>Methylococcus</taxon>
    </lineage>
</organism>
<gene>
    <name evidence="1" type="primary">uppP</name>
    <name type="ordered locus">MCA0666</name>
</gene>
<sequence>MLLPDWLNALILGLVEGLTEFLPVSSTGHLILVGELLKFNDDRGKLFEVVIQSGAILAVCWEYRRKLVELLFGLGHSRQARRFVLNLIIAFLPAGIVGFLAGKAIKAHLFNSTTVTTTFILGGLIILWVERRQRPPRVESIDDVDWRLALKLGLFQTLAMIPGTSRSGATIIGGLLLGLSRRAATEFSFFLAIPTLFIATAYDLYKTGGILHAEDLSAFGIGFAAAFVSAFLAVRGLLRYIGGHDFTAFAWYRIAFGLVVLSTAHYGLVAWTG</sequence>
<protein>
    <recommendedName>
        <fullName evidence="1">Undecaprenyl-diphosphatase</fullName>
        <ecNumber evidence="1">3.6.1.27</ecNumber>
    </recommendedName>
    <alternativeName>
        <fullName evidence="1">Bacitracin resistance protein</fullName>
    </alternativeName>
    <alternativeName>
        <fullName evidence="1">Undecaprenyl pyrophosphate phosphatase</fullName>
    </alternativeName>
</protein>
<feature type="chain" id="PRO_0000151162" description="Undecaprenyl-diphosphatase">
    <location>
        <begin position="1"/>
        <end position="273"/>
    </location>
</feature>
<feature type="transmembrane region" description="Helical" evidence="1">
    <location>
        <begin position="46"/>
        <end position="63"/>
    </location>
</feature>
<feature type="transmembrane region" description="Helical" evidence="1">
    <location>
        <begin position="83"/>
        <end position="103"/>
    </location>
</feature>
<feature type="transmembrane region" description="Helical" evidence="1">
    <location>
        <begin position="109"/>
        <end position="129"/>
    </location>
</feature>
<feature type="transmembrane region" description="Helical" evidence="1">
    <location>
        <begin position="184"/>
        <end position="204"/>
    </location>
</feature>
<feature type="transmembrane region" description="Helical" evidence="1">
    <location>
        <begin position="218"/>
        <end position="238"/>
    </location>
</feature>
<feature type="transmembrane region" description="Helical" evidence="1">
    <location>
        <begin position="249"/>
        <end position="269"/>
    </location>
</feature>
<reference key="1">
    <citation type="journal article" date="2004" name="PLoS Biol.">
        <title>Genomic insights into methanotrophy: the complete genome sequence of Methylococcus capsulatus (Bath).</title>
        <authorList>
            <person name="Ward N.L."/>
            <person name="Larsen O."/>
            <person name="Sakwa J."/>
            <person name="Bruseth L."/>
            <person name="Khouri H.M."/>
            <person name="Durkin A.S."/>
            <person name="Dimitrov G."/>
            <person name="Jiang L."/>
            <person name="Scanlan D."/>
            <person name="Kang K.H."/>
            <person name="Lewis M.R."/>
            <person name="Nelson K.E."/>
            <person name="Methe B.A."/>
            <person name="Wu M."/>
            <person name="Heidelberg J.F."/>
            <person name="Paulsen I.T."/>
            <person name="Fouts D.E."/>
            <person name="Ravel J."/>
            <person name="Tettelin H."/>
            <person name="Ren Q."/>
            <person name="Read T.D."/>
            <person name="DeBoy R.T."/>
            <person name="Seshadri R."/>
            <person name="Salzberg S.L."/>
            <person name="Jensen H.B."/>
            <person name="Birkeland N.K."/>
            <person name="Nelson W.C."/>
            <person name="Dodson R.J."/>
            <person name="Grindhaug S.H."/>
            <person name="Holt I.E."/>
            <person name="Eidhammer I."/>
            <person name="Jonasen I."/>
            <person name="Vanaken S."/>
            <person name="Utterback T.R."/>
            <person name="Feldblyum T.V."/>
            <person name="Fraser C.M."/>
            <person name="Lillehaug J.R."/>
            <person name="Eisen J.A."/>
        </authorList>
    </citation>
    <scope>NUCLEOTIDE SEQUENCE [LARGE SCALE GENOMIC DNA]</scope>
    <source>
        <strain>ATCC 33009 / NCIMB 11132 / Bath</strain>
    </source>
</reference>
<accession>Q60B18</accession>
<comment type="function">
    <text evidence="1">Catalyzes the dephosphorylation of undecaprenyl diphosphate (UPP). Confers resistance to bacitracin.</text>
</comment>
<comment type="catalytic activity">
    <reaction evidence="1">
        <text>di-trans,octa-cis-undecaprenyl diphosphate + H2O = di-trans,octa-cis-undecaprenyl phosphate + phosphate + H(+)</text>
        <dbReference type="Rhea" id="RHEA:28094"/>
        <dbReference type="ChEBI" id="CHEBI:15377"/>
        <dbReference type="ChEBI" id="CHEBI:15378"/>
        <dbReference type="ChEBI" id="CHEBI:43474"/>
        <dbReference type="ChEBI" id="CHEBI:58405"/>
        <dbReference type="ChEBI" id="CHEBI:60392"/>
        <dbReference type="EC" id="3.6.1.27"/>
    </reaction>
</comment>
<comment type="subcellular location">
    <subcellularLocation>
        <location evidence="1">Cell inner membrane</location>
        <topology evidence="1">Multi-pass membrane protein</topology>
    </subcellularLocation>
</comment>
<comment type="miscellaneous">
    <text>Bacitracin is thought to be involved in the inhibition of peptidoglycan synthesis by sequestering undecaprenyl diphosphate, thereby reducing the pool of lipid carrier available.</text>
</comment>
<comment type="similarity">
    <text evidence="1">Belongs to the UppP family.</text>
</comment>
<proteinExistence type="inferred from homology"/>
<dbReference type="EC" id="3.6.1.27" evidence="1"/>
<dbReference type="EMBL" id="AE017282">
    <property type="protein sequence ID" value="AAU93218.1"/>
    <property type="molecule type" value="Genomic_DNA"/>
</dbReference>
<dbReference type="RefSeq" id="WP_010960008.1">
    <property type="nucleotide sequence ID" value="NC_002977.6"/>
</dbReference>
<dbReference type="SMR" id="Q60B18"/>
<dbReference type="STRING" id="243233.MCA0666"/>
<dbReference type="GeneID" id="88222989"/>
<dbReference type="KEGG" id="mca:MCA0666"/>
<dbReference type="eggNOG" id="COG1968">
    <property type="taxonomic scope" value="Bacteria"/>
</dbReference>
<dbReference type="HOGENOM" id="CLU_060296_2_0_6"/>
<dbReference type="Proteomes" id="UP000006821">
    <property type="component" value="Chromosome"/>
</dbReference>
<dbReference type="GO" id="GO:0005886">
    <property type="term" value="C:plasma membrane"/>
    <property type="evidence" value="ECO:0007669"/>
    <property type="project" value="UniProtKB-SubCell"/>
</dbReference>
<dbReference type="GO" id="GO:0050380">
    <property type="term" value="F:undecaprenyl-diphosphatase activity"/>
    <property type="evidence" value="ECO:0007669"/>
    <property type="project" value="UniProtKB-UniRule"/>
</dbReference>
<dbReference type="GO" id="GO:0071555">
    <property type="term" value="P:cell wall organization"/>
    <property type="evidence" value="ECO:0007669"/>
    <property type="project" value="UniProtKB-KW"/>
</dbReference>
<dbReference type="GO" id="GO:0009252">
    <property type="term" value="P:peptidoglycan biosynthetic process"/>
    <property type="evidence" value="ECO:0007669"/>
    <property type="project" value="UniProtKB-KW"/>
</dbReference>
<dbReference type="GO" id="GO:0008360">
    <property type="term" value="P:regulation of cell shape"/>
    <property type="evidence" value="ECO:0007669"/>
    <property type="project" value="UniProtKB-KW"/>
</dbReference>
<dbReference type="GO" id="GO:0046677">
    <property type="term" value="P:response to antibiotic"/>
    <property type="evidence" value="ECO:0007669"/>
    <property type="project" value="UniProtKB-UniRule"/>
</dbReference>
<dbReference type="HAMAP" id="MF_01006">
    <property type="entry name" value="Undec_diphosphatase"/>
    <property type="match status" value="1"/>
</dbReference>
<dbReference type="InterPro" id="IPR003824">
    <property type="entry name" value="UppP"/>
</dbReference>
<dbReference type="NCBIfam" id="NF001389">
    <property type="entry name" value="PRK00281.1-2"/>
    <property type="match status" value="1"/>
</dbReference>
<dbReference type="NCBIfam" id="NF001390">
    <property type="entry name" value="PRK00281.1-4"/>
    <property type="match status" value="1"/>
</dbReference>
<dbReference type="NCBIfam" id="TIGR00753">
    <property type="entry name" value="undec_PP_bacA"/>
    <property type="match status" value="1"/>
</dbReference>
<dbReference type="PANTHER" id="PTHR30622">
    <property type="entry name" value="UNDECAPRENYL-DIPHOSPHATASE"/>
    <property type="match status" value="1"/>
</dbReference>
<dbReference type="PANTHER" id="PTHR30622:SF3">
    <property type="entry name" value="UNDECAPRENYL-DIPHOSPHATASE"/>
    <property type="match status" value="1"/>
</dbReference>
<dbReference type="Pfam" id="PF02673">
    <property type="entry name" value="BacA"/>
    <property type="match status" value="1"/>
</dbReference>